<sequence>APGPDGLTGTKGSMGEPGTDGEPGSPGPQGAKGETGLAGRRGLTGIPGKQGRQGERGEPGTAGSQGQQGQPGTQGPPGLPGKQGETGEPGESGEDGTPGPRGERGAQGERGATGMMGPSGDPGEAGIPGADGKAGERGVPGAPGPVGTPGLPGMPGQQGPMGPIGAKGSKGDVGPTGERGYDGKDGEPGRDGSPGPIGQPGIPGEKGEDGVPGSDGTPGSRGDSGPRGLPGNPGPPGRPGALGPSGPPGPQGPRGPRGEPGMKGPAGPPGRPGATGALGQLGKTGLKGEPGNQGRRGPPGLQGDPGKPGQSGPPGPPGPSGPSGRDGSDGQKGSSGEPGRPGKDGIPGQPGSNGKDGEPGTPGSDGRAGEIGPSGPIGPKGERGTPGATGPMGNSGPPGVQGSKGEKGPPGTNGRNGSPGISGSRGAQGPPGAPGSSGQNGVDGGTGENGTNGRPGLKGESGAPGDPGASGSAGPAGPPGPKGDTGPPGIQGEKGRRGADGIPGKTGEPGPQGDQGPKGQKGEVGPVGEKGDKGWTGTPGDPGPQGDRGEPGPPGRDGVDGPPGPRGAPGEMGAVGDPGLNGSMGEPGNKGPDGDLGESGAKGPDGIKGPPGPPGPPGPPGQPGMSEIASYLSVGNLEKGPGFRLYSSSGEEMPKQKIKAENVLKDLDEKDKEMDSLIAPDGSRKFPAKTCYDLFLDHGNFESGEYWIDPNGGTVKDAIKVYCDKKKNSSCVYPTNPKISDLVLKSGFESKEDKWLSKAFKKSEEVEYDAHYTQINFLRTLSNYANQNVTYACRNSKAWEDGQHSIKLMGSNDMEYHASSKISLRPTVIMNECANGGKLDKWGKTVLEIDTRERSRLPIVDVSAFDVGREGQDFKLEIGPACFHHIKY</sequence>
<evidence type="ECO:0000255" key="1"/>
<evidence type="ECO:0000255" key="2">
    <source>
        <dbReference type="PROSITE-ProRule" id="PRU00793"/>
    </source>
</evidence>
<evidence type="ECO:0000256" key="3">
    <source>
        <dbReference type="SAM" id="MobiDB-lite"/>
    </source>
</evidence>
<evidence type="ECO:0000269" key="4">
    <source>
    </source>
</evidence>
<evidence type="ECO:0000305" key="5"/>
<evidence type="ECO:0000305" key="6">
    <source>
    </source>
</evidence>
<proteinExistence type="evidence at protein level"/>
<reference evidence="5" key="1">
    <citation type="journal article" date="2012" name="Mol. Ecol.">
        <title>Whole transcriptome analysis of the coral Acropora millepora reveals complex responses to CO(2)-driven acidification during the initiation of calcification.</title>
        <authorList>
            <person name="Moya A."/>
            <person name="Huisman L."/>
            <person name="Ball E.E."/>
            <person name="Hayward D.C."/>
            <person name="Grasso L.C."/>
            <person name="Chua C.M."/>
            <person name="Woo H.N."/>
            <person name="Gattuso J.P."/>
            <person name="Foret S."/>
            <person name="Miller D.J."/>
        </authorList>
    </citation>
    <scope>NUCLEOTIDE SEQUENCE [MRNA]</scope>
</reference>
<reference evidence="5" key="2">
    <citation type="journal article" date="2013" name="Mol. Biol. Evol.">
        <title>The skeletal proteome of the coral Acropora millepora: the evolution of calcification by co-option and domain shuffling.</title>
        <authorList>
            <person name="Ramos-Silva P."/>
            <person name="Kaandorp J."/>
            <person name="Huisman L."/>
            <person name="Marie B."/>
            <person name="Zanella-Cleon I."/>
            <person name="Guichard N."/>
            <person name="Miller D.J."/>
            <person name="Marin F."/>
        </authorList>
    </citation>
    <scope>PROTEIN SEQUENCE OF 854-870</scope>
    <scope>TISSUE SPECIFICITY</scope>
    <scope>IDENTIFICATION BY MASS SPECTROMETRY</scope>
</reference>
<accession>B8V7R6</accession>
<comment type="subcellular location">
    <subcellularLocation>
        <location evidence="6">Secreted</location>
    </subcellularLocation>
</comment>
<comment type="tissue specificity">
    <text evidence="4">Component of the acid-insoluble organic matrix of the aragonitic skeleton (at protein level).</text>
</comment>
<comment type="similarity">
    <text evidence="2">Belongs to the fibrillar collagen family.</text>
</comment>
<dbReference type="EMBL" id="JR991083">
    <property type="status" value="NOT_ANNOTATED_CDS"/>
    <property type="molecule type" value="mRNA"/>
</dbReference>
<dbReference type="EMBL" id="JR996633">
    <property type="status" value="NOT_ANNOTATED_CDS"/>
    <property type="molecule type" value="mRNA"/>
</dbReference>
<dbReference type="SMR" id="B8V7R6"/>
<dbReference type="EnsemblMetazoa" id="XM_044317614.1">
    <property type="protein sequence ID" value="XP_044173549.1"/>
    <property type="gene ID" value="LOC114966715"/>
</dbReference>
<dbReference type="OrthoDB" id="8939548at2759"/>
<dbReference type="GO" id="GO:0005581">
    <property type="term" value="C:collagen trimer"/>
    <property type="evidence" value="ECO:0007669"/>
    <property type="project" value="UniProtKB-KW"/>
</dbReference>
<dbReference type="GO" id="GO:0031012">
    <property type="term" value="C:extracellular matrix"/>
    <property type="evidence" value="ECO:0007669"/>
    <property type="project" value="TreeGrafter"/>
</dbReference>
<dbReference type="GO" id="GO:0005615">
    <property type="term" value="C:extracellular space"/>
    <property type="evidence" value="ECO:0007669"/>
    <property type="project" value="TreeGrafter"/>
</dbReference>
<dbReference type="GO" id="GO:0005201">
    <property type="term" value="F:extracellular matrix structural constituent"/>
    <property type="evidence" value="ECO:0007669"/>
    <property type="project" value="InterPro"/>
</dbReference>
<dbReference type="Gene3D" id="2.60.120.1000">
    <property type="match status" value="1"/>
</dbReference>
<dbReference type="InterPro" id="IPR008160">
    <property type="entry name" value="Collagen"/>
</dbReference>
<dbReference type="InterPro" id="IPR050149">
    <property type="entry name" value="Collagen_superfamily"/>
</dbReference>
<dbReference type="InterPro" id="IPR000885">
    <property type="entry name" value="Fib_collagen_C"/>
</dbReference>
<dbReference type="PANTHER" id="PTHR24023">
    <property type="entry name" value="COLLAGEN ALPHA"/>
    <property type="match status" value="1"/>
</dbReference>
<dbReference type="PANTHER" id="PTHR24023:SF1082">
    <property type="entry name" value="COLLAGEN TRIPLE HELIX REPEAT"/>
    <property type="match status" value="1"/>
</dbReference>
<dbReference type="Pfam" id="PF01410">
    <property type="entry name" value="COLFI"/>
    <property type="match status" value="1"/>
</dbReference>
<dbReference type="Pfam" id="PF01391">
    <property type="entry name" value="Collagen"/>
    <property type="match status" value="3"/>
</dbReference>
<dbReference type="SMART" id="SM00038">
    <property type="entry name" value="COLFI"/>
    <property type="match status" value="1"/>
</dbReference>
<dbReference type="PROSITE" id="PS51461">
    <property type="entry name" value="NC1_FIB"/>
    <property type="match status" value="1"/>
</dbReference>
<keyword id="KW-0176">Collagen</keyword>
<keyword id="KW-0903">Direct protein sequencing</keyword>
<keyword id="KW-1015">Disulfide bond</keyword>
<keyword id="KW-0677">Repeat</keyword>
<keyword id="KW-0964">Secreted</keyword>
<name>COA_ACRMI</name>
<organism>
    <name type="scientific">Acropora millepora</name>
    <name type="common">Staghorn coral</name>
    <name type="synonym">Heteropora millepora</name>
    <dbReference type="NCBI Taxonomy" id="45264"/>
    <lineage>
        <taxon>Eukaryota</taxon>
        <taxon>Metazoa</taxon>
        <taxon>Cnidaria</taxon>
        <taxon>Anthozoa</taxon>
        <taxon>Hexacorallia</taxon>
        <taxon>Scleractinia</taxon>
        <taxon>Astrocoeniina</taxon>
        <taxon>Acroporidae</taxon>
        <taxon>Acropora</taxon>
    </lineage>
</organism>
<protein>
    <recommendedName>
        <fullName>Collagen alpha chain</fullName>
    </recommendedName>
</protein>
<feature type="chain" id="PRO_0000429494" description="Collagen alpha chain">
    <location>
        <begin position="1" status="less than"/>
        <end position="888"/>
    </location>
</feature>
<feature type="domain" description="Collagen-like 1" evidence="1">
    <location>
        <begin position="3"/>
        <end position="60"/>
    </location>
</feature>
<feature type="domain" description="Collagen-like 2" evidence="1">
    <location>
        <begin position="513"/>
        <end position="571"/>
    </location>
</feature>
<feature type="domain" description="Fibrillar collagen NC1" evidence="2">
    <location>
        <begin position="661"/>
        <end position="884"/>
    </location>
</feature>
<feature type="region of interest" description="Disordered" evidence="3">
    <location>
        <begin position="1"/>
        <end position="627"/>
    </location>
</feature>
<feature type="compositionally biased region" description="Low complexity" evidence="3">
    <location>
        <begin position="59"/>
        <end position="73"/>
    </location>
</feature>
<feature type="compositionally biased region" description="Low complexity" evidence="3">
    <location>
        <begin position="148"/>
        <end position="164"/>
    </location>
</feature>
<feature type="compositionally biased region" description="Basic and acidic residues" evidence="3">
    <location>
        <begin position="179"/>
        <end position="190"/>
    </location>
</feature>
<feature type="compositionally biased region" description="Low complexity" evidence="3">
    <location>
        <begin position="194"/>
        <end position="203"/>
    </location>
</feature>
<feature type="compositionally biased region" description="Pro residues" evidence="3">
    <location>
        <begin position="311"/>
        <end position="320"/>
    </location>
</feature>
<feature type="compositionally biased region" description="Low complexity" evidence="3">
    <location>
        <begin position="422"/>
        <end position="440"/>
    </location>
</feature>
<feature type="compositionally biased region" description="Gly residues" evidence="3">
    <location>
        <begin position="441"/>
        <end position="450"/>
    </location>
</feature>
<feature type="compositionally biased region" description="Low complexity" evidence="3">
    <location>
        <begin position="460"/>
        <end position="475"/>
    </location>
</feature>
<feature type="compositionally biased region" description="Low complexity" evidence="3">
    <location>
        <begin position="508"/>
        <end position="518"/>
    </location>
</feature>
<feature type="compositionally biased region" description="Pro residues" evidence="3">
    <location>
        <begin position="610"/>
        <end position="622"/>
    </location>
</feature>
<feature type="disulfide bond" description="Interchain" evidence="2">
    <location>
        <position position="691"/>
    </location>
</feature>
<feature type="disulfide bond" description="Interchain" evidence="2">
    <location>
        <position position="723"/>
    </location>
</feature>
<feature type="disulfide bond" evidence="2">
    <location>
        <begin position="731"/>
        <end position="882"/>
    </location>
</feature>
<feature type="disulfide bond" evidence="2">
    <location>
        <begin position="793"/>
        <end position="833"/>
    </location>
</feature>
<feature type="non-terminal residue" evidence="5">
    <location>
        <position position="1"/>
    </location>
</feature>